<proteinExistence type="inferred from homology"/>
<feature type="signal peptide" evidence="1">
    <location>
        <begin position="1"/>
        <end position="30"/>
    </location>
</feature>
<feature type="chain" id="PRO_0000013686" description="Uncharacterized protein AF_2355">
    <location>
        <begin position="31"/>
        <end position="73"/>
    </location>
</feature>
<accession>O30315</accession>
<reference key="1">
    <citation type="journal article" date="1997" name="Nature">
        <title>The complete genome sequence of the hyperthermophilic, sulphate-reducing archaeon Archaeoglobus fulgidus.</title>
        <authorList>
            <person name="Klenk H.-P."/>
            <person name="Clayton R.A."/>
            <person name="Tomb J.-F."/>
            <person name="White O."/>
            <person name="Nelson K.E."/>
            <person name="Ketchum K.A."/>
            <person name="Dodson R.J."/>
            <person name="Gwinn M.L."/>
            <person name="Hickey E.K."/>
            <person name="Peterson J.D."/>
            <person name="Richardson D.L."/>
            <person name="Kerlavage A.R."/>
            <person name="Graham D.E."/>
            <person name="Kyrpides N.C."/>
            <person name="Fleischmann R.D."/>
            <person name="Quackenbush J."/>
            <person name="Lee N.H."/>
            <person name="Sutton G.G."/>
            <person name="Gill S.R."/>
            <person name="Kirkness E.F."/>
            <person name="Dougherty B.A."/>
            <person name="McKenney K."/>
            <person name="Adams M.D."/>
            <person name="Loftus B.J."/>
            <person name="Peterson S.N."/>
            <person name="Reich C.I."/>
            <person name="McNeil L.K."/>
            <person name="Badger J.H."/>
            <person name="Glodek A."/>
            <person name="Zhou L."/>
            <person name="Overbeek R."/>
            <person name="Gocayne J.D."/>
            <person name="Weidman J.F."/>
            <person name="McDonald L.A."/>
            <person name="Utterback T.R."/>
            <person name="Cotton M.D."/>
            <person name="Spriggs T."/>
            <person name="Artiach P."/>
            <person name="Kaine B.P."/>
            <person name="Sykes S.M."/>
            <person name="Sadow P.W."/>
            <person name="D'Andrea K.P."/>
            <person name="Bowman C."/>
            <person name="Fujii C."/>
            <person name="Garland S.A."/>
            <person name="Mason T.M."/>
            <person name="Olsen G.J."/>
            <person name="Fraser C.M."/>
            <person name="Smith H.O."/>
            <person name="Woese C.R."/>
            <person name="Venter J.C."/>
        </authorList>
    </citation>
    <scope>NUCLEOTIDE SEQUENCE [LARGE SCALE GENOMIC DNA]</scope>
    <source>
        <strain>ATCC 49558 / DSM 4304 / JCM 9628 / NBRC 100126 / VC-16</strain>
    </source>
</reference>
<gene>
    <name type="ordered locus">AF_2355</name>
</gene>
<dbReference type="EMBL" id="AE000782">
    <property type="protein sequence ID" value="AAB91307.1"/>
    <property type="molecule type" value="Genomic_DNA"/>
</dbReference>
<dbReference type="PIR" id="C69544">
    <property type="entry name" value="C69544"/>
</dbReference>
<dbReference type="RefSeq" id="WP_010879841.1">
    <property type="nucleotide sequence ID" value="NC_000917.1"/>
</dbReference>
<dbReference type="STRING" id="224325.AF_2355"/>
<dbReference type="PaxDb" id="224325-AF_2355"/>
<dbReference type="EnsemblBacteria" id="AAB91307">
    <property type="protein sequence ID" value="AAB91307"/>
    <property type="gene ID" value="AF_2355"/>
</dbReference>
<dbReference type="GeneID" id="1485585"/>
<dbReference type="KEGG" id="afu:AF_2355"/>
<dbReference type="HOGENOM" id="CLU_2695502_0_0_2"/>
<dbReference type="OrthoDB" id="275823at2157"/>
<dbReference type="Proteomes" id="UP000002199">
    <property type="component" value="Chromosome"/>
</dbReference>
<evidence type="ECO:0000255" key="1"/>
<name>Y2355_ARCFU</name>
<protein>
    <recommendedName>
        <fullName>Uncharacterized protein AF_2355</fullName>
    </recommendedName>
</protein>
<sequence>MVDFYFIEEKVAYRAAFTTTGKIAATLGLAKTQAVLGPKGYGLLLNEIQWMLRGEINEVWAGLLEALRNNSLI</sequence>
<keyword id="KW-1185">Reference proteome</keyword>
<keyword id="KW-0732">Signal</keyword>
<organism>
    <name type="scientific">Archaeoglobus fulgidus (strain ATCC 49558 / DSM 4304 / JCM 9628 / NBRC 100126 / VC-16)</name>
    <dbReference type="NCBI Taxonomy" id="224325"/>
    <lineage>
        <taxon>Archaea</taxon>
        <taxon>Methanobacteriati</taxon>
        <taxon>Methanobacteriota</taxon>
        <taxon>Archaeoglobi</taxon>
        <taxon>Archaeoglobales</taxon>
        <taxon>Archaeoglobaceae</taxon>
        <taxon>Archaeoglobus</taxon>
    </lineage>
</organism>